<dbReference type="EC" id="2.7.7.27" evidence="1"/>
<dbReference type="EMBL" id="CP000605">
    <property type="protein sequence ID" value="ACD98046.1"/>
    <property type="molecule type" value="Genomic_DNA"/>
</dbReference>
<dbReference type="RefSeq" id="WP_007052151.1">
    <property type="nucleotide sequence ID" value="NZ_AABM02000001.1"/>
</dbReference>
<dbReference type="SMR" id="B3DSC7"/>
<dbReference type="GeneID" id="69577993"/>
<dbReference type="KEGG" id="blj:BLD_0600"/>
<dbReference type="HOGENOM" id="CLU_029499_14_1_11"/>
<dbReference type="UniPathway" id="UPA00164"/>
<dbReference type="Proteomes" id="UP000002419">
    <property type="component" value="Chromosome"/>
</dbReference>
<dbReference type="GO" id="GO:0005524">
    <property type="term" value="F:ATP binding"/>
    <property type="evidence" value="ECO:0007669"/>
    <property type="project" value="UniProtKB-KW"/>
</dbReference>
<dbReference type="GO" id="GO:0008878">
    <property type="term" value="F:glucose-1-phosphate adenylyltransferase activity"/>
    <property type="evidence" value="ECO:0007669"/>
    <property type="project" value="UniProtKB-UniRule"/>
</dbReference>
<dbReference type="GO" id="GO:0005978">
    <property type="term" value="P:glycogen biosynthetic process"/>
    <property type="evidence" value="ECO:0007669"/>
    <property type="project" value="UniProtKB-UniRule"/>
</dbReference>
<dbReference type="CDD" id="cd02508">
    <property type="entry name" value="ADP_Glucose_PP"/>
    <property type="match status" value="1"/>
</dbReference>
<dbReference type="CDD" id="cd04651">
    <property type="entry name" value="LbH_G1P_AT_C"/>
    <property type="match status" value="1"/>
</dbReference>
<dbReference type="Gene3D" id="2.160.10.10">
    <property type="entry name" value="Hexapeptide repeat proteins"/>
    <property type="match status" value="1"/>
</dbReference>
<dbReference type="Gene3D" id="3.90.550.10">
    <property type="entry name" value="Spore Coat Polysaccharide Biosynthesis Protein SpsA, Chain A"/>
    <property type="match status" value="1"/>
</dbReference>
<dbReference type="HAMAP" id="MF_00624">
    <property type="entry name" value="GlgC"/>
    <property type="match status" value="1"/>
</dbReference>
<dbReference type="InterPro" id="IPR011831">
    <property type="entry name" value="ADP-Glc_PPase"/>
</dbReference>
<dbReference type="InterPro" id="IPR005836">
    <property type="entry name" value="ADP_Glu_pyroP_CS"/>
</dbReference>
<dbReference type="InterPro" id="IPR023049">
    <property type="entry name" value="GlgC_bac"/>
</dbReference>
<dbReference type="InterPro" id="IPR056818">
    <property type="entry name" value="GlmU/GlgC-like_hexapep"/>
</dbReference>
<dbReference type="InterPro" id="IPR005835">
    <property type="entry name" value="NTP_transferase_dom"/>
</dbReference>
<dbReference type="InterPro" id="IPR029044">
    <property type="entry name" value="Nucleotide-diphossugar_trans"/>
</dbReference>
<dbReference type="InterPro" id="IPR011004">
    <property type="entry name" value="Trimer_LpxA-like_sf"/>
</dbReference>
<dbReference type="NCBIfam" id="TIGR02091">
    <property type="entry name" value="glgC"/>
    <property type="match status" value="1"/>
</dbReference>
<dbReference type="NCBIfam" id="NF001947">
    <property type="entry name" value="PRK00725.1"/>
    <property type="match status" value="1"/>
</dbReference>
<dbReference type="NCBIfam" id="NF002023">
    <property type="entry name" value="PRK00844.1"/>
    <property type="match status" value="1"/>
</dbReference>
<dbReference type="PANTHER" id="PTHR43523:SF2">
    <property type="entry name" value="GLUCOSE-1-PHOSPHATE ADENYLYLTRANSFERASE"/>
    <property type="match status" value="1"/>
</dbReference>
<dbReference type="PANTHER" id="PTHR43523">
    <property type="entry name" value="GLUCOSE-1-PHOSPHATE ADENYLYLTRANSFERASE-RELATED"/>
    <property type="match status" value="1"/>
</dbReference>
<dbReference type="Pfam" id="PF24894">
    <property type="entry name" value="Hexapep_GlmU"/>
    <property type="match status" value="1"/>
</dbReference>
<dbReference type="Pfam" id="PF00483">
    <property type="entry name" value="NTP_transferase"/>
    <property type="match status" value="1"/>
</dbReference>
<dbReference type="SUPFAM" id="SSF53448">
    <property type="entry name" value="Nucleotide-diphospho-sugar transferases"/>
    <property type="match status" value="1"/>
</dbReference>
<dbReference type="SUPFAM" id="SSF51161">
    <property type="entry name" value="Trimeric LpxA-like enzymes"/>
    <property type="match status" value="1"/>
</dbReference>
<dbReference type="PROSITE" id="PS00808">
    <property type="entry name" value="ADP_GLC_PYROPHOSPH_1"/>
    <property type="match status" value="1"/>
</dbReference>
<dbReference type="PROSITE" id="PS00809">
    <property type="entry name" value="ADP_GLC_PYROPHOSPH_2"/>
    <property type="match status" value="1"/>
</dbReference>
<comment type="function">
    <text evidence="1">Involved in the biosynthesis of ADP-glucose, a building block required for the elongation reactions to produce glycogen. Catalyzes the reaction between ATP and alpha-D-glucose 1-phosphate (G1P) to produce pyrophosphate and ADP-Glc.</text>
</comment>
<comment type="catalytic activity">
    <reaction evidence="1">
        <text>alpha-D-glucose 1-phosphate + ATP + H(+) = ADP-alpha-D-glucose + diphosphate</text>
        <dbReference type="Rhea" id="RHEA:12120"/>
        <dbReference type="ChEBI" id="CHEBI:15378"/>
        <dbReference type="ChEBI" id="CHEBI:30616"/>
        <dbReference type="ChEBI" id="CHEBI:33019"/>
        <dbReference type="ChEBI" id="CHEBI:57498"/>
        <dbReference type="ChEBI" id="CHEBI:58601"/>
        <dbReference type="EC" id="2.7.7.27"/>
    </reaction>
</comment>
<comment type="pathway">
    <text evidence="1">Glycan biosynthesis; glycogen biosynthesis.</text>
</comment>
<comment type="subunit">
    <text evidence="1">Homotetramer.</text>
</comment>
<comment type="similarity">
    <text evidence="1">Belongs to the bacterial/plant glucose-1-phosphate adenylyltransferase family.</text>
</comment>
<protein>
    <recommendedName>
        <fullName evidence="1">Glucose-1-phosphate adenylyltransferase</fullName>
        <ecNumber evidence="1">2.7.7.27</ecNumber>
    </recommendedName>
    <alternativeName>
        <fullName evidence="1">ADP-glucose pyrophosphorylase</fullName>
        <shortName evidence="1">ADPGlc PPase</shortName>
    </alternativeName>
    <alternativeName>
        <fullName evidence="1">ADP-glucose synthase</fullName>
    </alternativeName>
</protein>
<evidence type="ECO:0000255" key="1">
    <source>
        <dbReference type="HAMAP-Rule" id="MF_00624"/>
    </source>
</evidence>
<accession>B3DSC7</accession>
<gene>
    <name evidence="1" type="primary">glgC</name>
    <name type="ordered locus">BLD_0600</name>
</gene>
<feature type="chain" id="PRO_1000130467" description="Glucose-1-phosphate adenylyltransferase">
    <location>
        <begin position="1"/>
        <end position="414"/>
    </location>
</feature>
<feature type="binding site" evidence="1">
    <location>
        <position position="99"/>
    </location>
    <ligand>
        <name>alpha-D-glucose 1-phosphate</name>
        <dbReference type="ChEBI" id="CHEBI:58601"/>
    </ligand>
</feature>
<feature type="binding site" evidence="1">
    <location>
        <position position="164"/>
    </location>
    <ligand>
        <name>alpha-D-glucose 1-phosphate</name>
        <dbReference type="ChEBI" id="CHEBI:58601"/>
    </ligand>
</feature>
<feature type="binding site" evidence="1">
    <location>
        <begin position="181"/>
        <end position="182"/>
    </location>
    <ligand>
        <name>alpha-D-glucose 1-phosphate</name>
        <dbReference type="ChEBI" id="CHEBI:58601"/>
    </ligand>
</feature>
<feature type="binding site" evidence="1">
    <location>
        <position position="199"/>
    </location>
    <ligand>
        <name>alpha-D-glucose 1-phosphate</name>
        <dbReference type="ChEBI" id="CHEBI:58601"/>
    </ligand>
</feature>
<organism>
    <name type="scientific">Bifidobacterium longum (strain DJO10A)</name>
    <dbReference type="NCBI Taxonomy" id="205913"/>
    <lineage>
        <taxon>Bacteria</taxon>
        <taxon>Bacillati</taxon>
        <taxon>Actinomycetota</taxon>
        <taxon>Actinomycetes</taxon>
        <taxon>Bifidobacteriales</taxon>
        <taxon>Bifidobacteriaceae</taxon>
        <taxon>Bifidobacterium</taxon>
    </lineage>
</organism>
<proteinExistence type="inferred from homology"/>
<keyword id="KW-0067">ATP-binding</keyword>
<keyword id="KW-0119">Carbohydrate metabolism</keyword>
<keyword id="KW-0320">Glycogen biosynthesis</keyword>
<keyword id="KW-0321">Glycogen metabolism</keyword>
<keyword id="KW-0547">Nucleotide-binding</keyword>
<keyword id="KW-0548">Nucleotidyltransferase</keyword>
<keyword id="KW-0808">Transferase</keyword>
<sequence length="414" mass="45832">MTKNPKILSIVLAGGEGTRLMPLTRDRAKPAVPFGGVYRLIDFPLSNLVNSGYRQVVVLTQYKSHSLDRHISQVWRFSPLLGSYVSPVPAQQRLGKHWYLGSADAIYQTINIIEDVQPDIVVIVGADHVYRMDFEQMVQQHIESGAEFTVAGIRQPIEESNQFGVIEVDPDHPNMIKNFQEKPPTTTGLPDNPNQILASMGNYVANTKALFEALALDEKAADTKHDMGGDIAPYFASRNEAGVYDFNSNEIPGSTATDHAYWRDVGTIKQFYDAHMDLIAYVPEFNLYNQDWPIYTMSGNLPPAKFVHAGRDRLGHATDSIVSPGVIVSGGEVHHSVLSPNVRIHSWAQIVDSVLFDGVVINRRARVYKAILDKNVVLTENSTVGIDTEHDLARGFTVTPDGITVVPKNTIVDD</sequence>
<reference key="1">
    <citation type="journal article" date="2008" name="BMC Genomics">
        <title>Comparative genomic analysis of the gut bacterium Bifidobacterium longum reveals loci susceptible to deletion during pure culture growth.</title>
        <authorList>
            <person name="Lee J.H."/>
            <person name="Karamychev V.N."/>
            <person name="Kozyavkin S.A."/>
            <person name="Mills D."/>
            <person name="Pavlov A.R."/>
            <person name="Pavlova N.V."/>
            <person name="Polouchine N.N."/>
            <person name="Richardson P.M."/>
            <person name="Shakhova V.V."/>
            <person name="Slesarev A.I."/>
            <person name="Weimer B."/>
            <person name="O'Sullivan D.J."/>
        </authorList>
    </citation>
    <scope>NUCLEOTIDE SEQUENCE [LARGE SCALE GENOMIC DNA]</scope>
    <source>
        <strain>DJO10A</strain>
    </source>
</reference>
<name>GLGC_BIFLD</name>